<evidence type="ECO:0000255" key="1">
    <source>
        <dbReference type="HAMAP-Rule" id="MF_00262"/>
    </source>
</evidence>
<sequence>MALLEFFRPQKKATANIAKERLQIIVAERRNGGPAPSYLPQLKEDILKVISKYVEVNPDMVTVSLEQKEEDLSVLELNVTLPDEDDH</sequence>
<feature type="chain" id="PRO_1000114251" description="Cell division topological specificity factor">
    <location>
        <begin position="1"/>
        <end position="87"/>
    </location>
</feature>
<protein>
    <recommendedName>
        <fullName evidence="1">Cell division topological specificity factor</fullName>
    </recommendedName>
</protein>
<gene>
    <name evidence="1" type="primary">minE</name>
    <name type="ordered locus">VFMJ11_1832</name>
</gene>
<proteinExistence type="inferred from homology"/>
<keyword id="KW-0131">Cell cycle</keyword>
<keyword id="KW-0132">Cell division</keyword>
<name>MINE_ALIFM</name>
<organism>
    <name type="scientific">Aliivibrio fischeri (strain MJ11)</name>
    <name type="common">Vibrio fischeri</name>
    <dbReference type="NCBI Taxonomy" id="388396"/>
    <lineage>
        <taxon>Bacteria</taxon>
        <taxon>Pseudomonadati</taxon>
        <taxon>Pseudomonadota</taxon>
        <taxon>Gammaproteobacteria</taxon>
        <taxon>Vibrionales</taxon>
        <taxon>Vibrionaceae</taxon>
        <taxon>Aliivibrio</taxon>
    </lineage>
</organism>
<dbReference type="EMBL" id="CP001139">
    <property type="protein sequence ID" value="ACH67273.1"/>
    <property type="molecule type" value="Genomic_DNA"/>
</dbReference>
<dbReference type="RefSeq" id="WP_005420052.1">
    <property type="nucleotide sequence ID" value="NC_011184.1"/>
</dbReference>
<dbReference type="SMR" id="B5FFP7"/>
<dbReference type="GeneID" id="54164401"/>
<dbReference type="KEGG" id="vfm:VFMJ11_1832"/>
<dbReference type="HOGENOM" id="CLU_137929_2_2_6"/>
<dbReference type="Proteomes" id="UP000001857">
    <property type="component" value="Chromosome I"/>
</dbReference>
<dbReference type="GO" id="GO:0051301">
    <property type="term" value="P:cell division"/>
    <property type="evidence" value="ECO:0007669"/>
    <property type="project" value="UniProtKB-KW"/>
</dbReference>
<dbReference type="GO" id="GO:0032955">
    <property type="term" value="P:regulation of division septum assembly"/>
    <property type="evidence" value="ECO:0007669"/>
    <property type="project" value="InterPro"/>
</dbReference>
<dbReference type="FunFam" id="3.30.1070.10:FF:000001">
    <property type="entry name" value="Cell division topological specificity factor"/>
    <property type="match status" value="1"/>
</dbReference>
<dbReference type="Gene3D" id="3.30.1070.10">
    <property type="entry name" value="Cell division topological specificity factor MinE"/>
    <property type="match status" value="1"/>
</dbReference>
<dbReference type="HAMAP" id="MF_00262">
    <property type="entry name" value="MinE"/>
    <property type="match status" value="1"/>
</dbReference>
<dbReference type="InterPro" id="IPR005527">
    <property type="entry name" value="MinE"/>
</dbReference>
<dbReference type="InterPro" id="IPR036707">
    <property type="entry name" value="MinE_sf"/>
</dbReference>
<dbReference type="NCBIfam" id="TIGR01215">
    <property type="entry name" value="minE"/>
    <property type="match status" value="1"/>
</dbReference>
<dbReference type="NCBIfam" id="NF001422">
    <property type="entry name" value="PRK00296.1"/>
    <property type="match status" value="1"/>
</dbReference>
<dbReference type="Pfam" id="PF03776">
    <property type="entry name" value="MinE"/>
    <property type="match status" value="1"/>
</dbReference>
<dbReference type="SUPFAM" id="SSF55229">
    <property type="entry name" value="Cell division protein MinE topological specificity domain"/>
    <property type="match status" value="1"/>
</dbReference>
<comment type="function">
    <text evidence="1">Prevents the cell division inhibition by proteins MinC and MinD at internal division sites while permitting inhibition at polar sites. This ensures cell division at the proper site by restricting the formation of a division septum at the midpoint of the long axis of the cell.</text>
</comment>
<comment type="similarity">
    <text evidence="1">Belongs to the MinE family.</text>
</comment>
<reference key="1">
    <citation type="submission" date="2008-08" db="EMBL/GenBank/DDBJ databases">
        <title>Complete sequence of Vibrio fischeri strain MJ11.</title>
        <authorList>
            <person name="Mandel M.J."/>
            <person name="Stabb E.V."/>
            <person name="Ruby E.G."/>
            <person name="Ferriera S."/>
            <person name="Johnson J."/>
            <person name="Kravitz S."/>
            <person name="Beeson K."/>
            <person name="Sutton G."/>
            <person name="Rogers Y.-H."/>
            <person name="Friedman R."/>
            <person name="Frazier M."/>
            <person name="Venter J.C."/>
        </authorList>
    </citation>
    <scope>NUCLEOTIDE SEQUENCE [LARGE SCALE GENOMIC DNA]</scope>
    <source>
        <strain>MJ11</strain>
    </source>
</reference>
<accession>B5FFP7</accession>